<name>SSUB_PSEPK</name>
<comment type="function">
    <text evidence="1">Part of the ABC transporter complex SsuABC involved in aliphatic sulfonates import. Responsible for energy coupling to the transport system.</text>
</comment>
<comment type="catalytic activity">
    <reaction evidence="1">
        <text>ATP + H2O + aliphatic sulfonate-[sulfonate-binding protein]Side 1 = ADP + phosphate + aliphatic sulfonateSide 2 + [sulfonate-binding protein]Side 1.</text>
        <dbReference type="EC" id="7.6.2.14"/>
    </reaction>
</comment>
<comment type="subunit">
    <text evidence="1">The complex is composed of two ATP-binding proteins (SsuB), two transmembrane proteins (SsuC) and a solute-binding protein (SsuA).</text>
</comment>
<comment type="subcellular location">
    <subcellularLocation>
        <location evidence="1">Cell inner membrane</location>
        <topology evidence="1">Peripheral membrane protein</topology>
    </subcellularLocation>
</comment>
<comment type="similarity">
    <text evidence="1">Belongs to the ABC transporter superfamily. Aliphatic sulfonates importer (TC 3.A.1.17.2) family.</text>
</comment>
<organism>
    <name type="scientific">Pseudomonas putida (strain ATCC 47054 / DSM 6125 / CFBP 8728 / NCIMB 11950 / KT2440)</name>
    <dbReference type="NCBI Taxonomy" id="160488"/>
    <lineage>
        <taxon>Bacteria</taxon>
        <taxon>Pseudomonadati</taxon>
        <taxon>Pseudomonadota</taxon>
        <taxon>Gammaproteobacteria</taxon>
        <taxon>Pseudomonadales</taxon>
        <taxon>Pseudomonadaceae</taxon>
        <taxon>Pseudomonas</taxon>
    </lineage>
</organism>
<sequence>MTVLKEQPPRLLRGTPLASKGLRKTFGQREVLKGIDLHIPAGQFVAIVGRSGCGKSTLLRLLAGLDQPTAGQLLAGAAPLEEAREETRLMFQDARLLPWKKVIDNVGLGLSGDWRPRALEALDAVGLADRANEWPAALSGGQKQRVALARALIHQPRLLLLDEPLGALDALTRIEMQQLIERLWRQHGFTVLLVTHDVSEAVAVADRVILIEDGEVGLDLTVDLARPRARGSHRLAALESEVLNRVLSTPGTAPEPDPVAPLPTQLRWAH</sequence>
<evidence type="ECO:0000255" key="1">
    <source>
        <dbReference type="HAMAP-Rule" id="MF_01724"/>
    </source>
</evidence>
<evidence type="ECO:0000256" key="2">
    <source>
        <dbReference type="SAM" id="MobiDB-lite"/>
    </source>
</evidence>
<proteinExistence type="inferred from homology"/>
<protein>
    <recommendedName>
        <fullName evidence="1">Aliphatic sulfonates import ATP-binding protein SsuB</fullName>
        <ecNumber evidence="1">7.6.2.14</ecNumber>
    </recommendedName>
</protein>
<feature type="chain" id="PRO_0000279936" description="Aliphatic sulfonates import ATP-binding protein SsuB">
    <location>
        <begin position="1"/>
        <end position="270"/>
    </location>
</feature>
<feature type="domain" description="ABC transporter" evidence="1">
    <location>
        <begin position="17"/>
        <end position="238"/>
    </location>
</feature>
<feature type="region of interest" description="Disordered" evidence="2">
    <location>
        <begin position="248"/>
        <end position="270"/>
    </location>
</feature>
<feature type="binding site" evidence="1">
    <location>
        <begin position="49"/>
        <end position="56"/>
    </location>
    <ligand>
        <name>ATP</name>
        <dbReference type="ChEBI" id="CHEBI:30616"/>
    </ligand>
</feature>
<reference key="1">
    <citation type="journal article" date="2002" name="Environ. Microbiol.">
        <title>Complete genome sequence and comparative analysis of the metabolically versatile Pseudomonas putida KT2440.</title>
        <authorList>
            <person name="Nelson K.E."/>
            <person name="Weinel C."/>
            <person name="Paulsen I.T."/>
            <person name="Dodson R.J."/>
            <person name="Hilbert H."/>
            <person name="Martins dos Santos V.A.P."/>
            <person name="Fouts D.E."/>
            <person name="Gill S.R."/>
            <person name="Pop M."/>
            <person name="Holmes M."/>
            <person name="Brinkac L.M."/>
            <person name="Beanan M.J."/>
            <person name="DeBoy R.T."/>
            <person name="Daugherty S.C."/>
            <person name="Kolonay J.F."/>
            <person name="Madupu R."/>
            <person name="Nelson W.C."/>
            <person name="White O."/>
            <person name="Peterson J.D."/>
            <person name="Khouri H.M."/>
            <person name="Hance I."/>
            <person name="Chris Lee P."/>
            <person name="Holtzapple E.K."/>
            <person name="Scanlan D."/>
            <person name="Tran K."/>
            <person name="Moazzez A."/>
            <person name="Utterback T.R."/>
            <person name="Rizzo M."/>
            <person name="Lee K."/>
            <person name="Kosack D."/>
            <person name="Moestl D."/>
            <person name="Wedler H."/>
            <person name="Lauber J."/>
            <person name="Stjepandic D."/>
            <person name="Hoheisel J."/>
            <person name="Straetz M."/>
            <person name="Heim S."/>
            <person name="Kiewitz C."/>
            <person name="Eisen J.A."/>
            <person name="Timmis K.N."/>
            <person name="Duesterhoeft A."/>
            <person name="Tuemmler B."/>
            <person name="Fraser C.M."/>
        </authorList>
    </citation>
    <scope>NUCLEOTIDE SEQUENCE [LARGE SCALE GENOMIC DNA]</scope>
    <source>
        <strain>ATCC 47054 / DSM 6125 / CFBP 8728 / NCIMB 11950 / KT2440</strain>
    </source>
</reference>
<dbReference type="EC" id="7.6.2.14" evidence="1"/>
<dbReference type="EMBL" id="AE015451">
    <property type="protein sequence ID" value="AAN65872.1"/>
    <property type="molecule type" value="Genomic_DNA"/>
</dbReference>
<dbReference type="RefSeq" id="NP_742408.1">
    <property type="nucleotide sequence ID" value="NC_002947.4"/>
</dbReference>
<dbReference type="RefSeq" id="WP_010951617.1">
    <property type="nucleotide sequence ID" value="NZ_CP169744.1"/>
</dbReference>
<dbReference type="SMR" id="Q88R93"/>
<dbReference type="STRING" id="160488.PP_0240"/>
<dbReference type="PaxDb" id="160488-PP_0240"/>
<dbReference type="GeneID" id="83677501"/>
<dbReference type="KEGG" id="ppu:PP_0240"/>
<dbReference type="PATRIC" id="fig|160488.4.peg.256"/>
<dbReference type="eggNOG" id="COG1116">
    <property type="taxonomic scope" value="Bacteria"/>
</dbReference>
<dbReference type="HOGENOM" id="CLU_000604_1_22_6"/>
<dbReference type="OrthoDB" id="9802264at2"/>
<dbReference type="PhylomeDB" id="Q88R93"/>
<dbReference type="BioCyc" id="PPUT160488:G1G01-262-MONOMER"/>
<dbReference type="Proteomes" id="UP000000556">
    <property type="component" value="Chromosome"/>
</dbReference>
<dbReference type="GO" id="GO:0005886">
    <property type="term" value="C:plasma membrane"/>
    <property type="evidence" value="ECO:0007669"/>
    <property type="project" value="UniProtKB-SubCell"/>
</dbReference>
<dbReference type="GO" id="GO:0005524">
    <property type="term" value="F:ATP binding"/>
    <property type="evidence" value="ECO:0007669"/>
    <property type="project" value="UniProtKB-KW"/>
</dbReference>
<dbReference type="GO" id="GO:0016887">
    <property type="term" value="F:ATP hydrolysis activity"/>
    <property type="evidence" value="ECO:0007669"/>
    <property type="project" value="InterPro"/>
</dbReference>
<dbReference type="CDD" id="cd03293">
    <property type="entry name" value="ABC_NrtD_SsuB_transporters"/>
    <property type="match status" value="1"/>
</dbReference>
<dbReference type="FunFam" id="3.40.50.300:FF:000653">
    <property type="entry name" value="Aliphatic sulfonates import ATP-binding protein SsuB"/>
    <property type="match status" value="1"/>
</dbReference>
<dbReference type="Gene3D" id="3.40.50.300">
    <property type="entry name" value="P-loop containing nucleotide triphosphate hydrolases"/>
    <property type="match status" value="1"/>
</dbReference>
<dbReference type="InterPro" id="IPR003593">
    <property type="entry name" value="AAA+_ATPase"/>
</dbReference>
<dbReference type="InterPro" id="IPR003439">
    <property type="entry name" value="ABC_transporter-like_ATP-bd"/>
</dbReference>
<dbReference type="InterPro" id="IPR017871">
    <property type="entry name" value="ABC_transporter-like_CS"/>
</dbReference>
<dbReference type="InterPro" id="IPR050166">
    <property type="entry name" value="ABC_transporter_ATP-bind"/>
</dbReference>
<dbReference type="InterPro" id="IPR027417">
    <property type="entry name" value="P-loop_NTPase"/>
</dbReference>
<dbReference type="NCBIfam" id="NF008420">
    <property type="entry name" value="PRK11247.1"/>
    <property type="match status" value="1"/>
</dbReference>
<dbReference type="PANTHER" id="PTHR42788:SF17">
    <property type="entry name" value="ALIPHATIC SULFONATES IMPORT ATP-BINDING PROTEIN SSUB"/>
    <property type="match status" value="1"/>
</dbReference>
<dbReference type="PANTHER" id="PTHR42788">
    <property type="entry name" value="TAURINE IMPORT ATP-BINDING PROTEIN-RELATED"/>
    <property type="match status" value="1"/>
</dbReference>
<dbReference type="Pfam" id="PF00005">
    <property type="entry name" value="ABC_tran"/>
    <property type="match status" value="1"/>
</dbReference>
<dbReference type="SMART" id="SM00382">
    <property type="entry name" value="AAA"/>
    <property type="match status" value="1"/>
</dbReference>
<dbReference type="SUPFAM" id="SSF52540">
    <property type="entry name" value="P-loop containing nucleoside triphosphate hydrolases"/>
    <property type="match status" value="1"/>
</dbReference>
<dbReference type="PROSITE" id="PS00211">
    <property type="entry name" value="ABC_TRANSPORTER_1"/>
    <property type="match status" value="1"/>
</dbReference>
<dbReference type="PROSITE" id="PS50893">
    <property type="entry name" value="ABC_TRANSPORTER_2"/>
    <property type="match status" value="1"/>
</dbReference>
<dbReference type="PROSITE" id="PS51291">
    <property type="entry name" value="SSUB"/>
    <property type="match status" value="1"/>
</dbReference>
<keyword id="KW-0067">ATP-binding</keyword>
<keyword id="KW-0997">Cell inner membrane</keyword>
<keyword id="KW-1003">Cell membrane</keyword>
<keyword id="KW-0472">Membrane</keyword>
<keyword id="KW-0547">Nucleotide-binding</keyword>
<keyword id="KW-1185">Reference proteome</keyword>
<keyword id="KW-1278">Translocase</keyword>
<keyword id="KW-0813">Transport</keyword>
<gene>
    <name evidence="1" type="primary">ssuB</name>
    <name type="ordered locus">PP_0240</name>
</gene>
<accession>Q88R93</accession>